<sequence length="134" mass="15215">MQAMLPVILILLLPCIALASTATRATPEQLRKCKFQQPWSFLDCYHEKSDFPTYWIVIVGIINILSCTFFSITIYPTFNFGWNSPNALGYPQEPDEHIPLQHIQQPLALVEYENEPQPSLPPAISYFNLTGGDD</sequence>
<name>E3B14_ADE07</name>
<reference key="1">
    <citation type="journal article" date="1988" name="Virology">
        <title>Characterization of the early region 3 and fiber genes of Ad7.</title>
        <authorList>
            <person name="Hong J.S."/>
            <person name="Mullis K.G."/>
            <person name="Engler J.A."/>
        </authorList>
    </citation>
    <scope>NUCLEOTIDE SEQUENCE [GENOMIC DNA]</scope>
    <source>
        <strain>Gomen</strain>
    </source>
</reference>
<organismHost>
    <name type="scientific">Homo sapiens</name>
    <name type="common">Human</name>
    <dbReference type="NCBI Taxonomy" id="9606"/>
</organismHost>
<accession>P15136</accession>
<evidence type="ECO:0000250" key="1"/>
<evidence type="ECO:0000255" key="2"/>
<evidence type="ECO:0000305" key="3"/>
<feature type="signal peptide" evidence="2">
    <location>
        <begin position="1"/>
        <end position="19"/>
    </location>
</feature>
<feature type="chain" id="PRO_0000036480" description="Early E3B 14.9 kDa protein">
    <location>
        <begin position="20"/>
        <end position="134"/>
    </location>
</feature>
<feature type="transmembrane region" description="Helical" evidence="2">
    <location>
        <begin position="54"/>
        <end position="78"/>
    </location>
</feature>
<dbReference type="EMBL" id="M23696">
    <property type="protein sequence ID" value="AAA53252.1"/>
    <property type="molecule type" value="Genomic_DNA"/>
</dbReference>
<dbReference type="PIR" id="D31830">
    <property type="entry name" value="ERAD78"/>
</dbReference>
<dbReference type="RefSeq" id="AP_000561.1">
    <property type="nucleotide sequence ID" value="AC_000018.1"/>
</dbReference>
<dbReference type="GO" id="GO:0033644">
    <property type="term" value="C:host cell membrane"/>
    <property type="evidence" value="ECO:0007669"/>
    <property type="project" value="UniProtKB-SubCell"/>
</dbReference>
<dbReference type="GO" id="GO:0016020">
    <property type="term" value="C:membrane"/>
    <property type="evidence" value="ECO:0007669"/>
    <property type="project" value="UniProtKB-KW"/>
</dbReference>
<dbReference type="GO" id="GO:0009966">
    <property type="term" value="P:regulation of signal transduction"/>
    <property type="evidence" value="ECO:0007669"/>
    <property type="project" value="InterPro"/>
</dbReference>
<dbReference type="InterPro" id="IPR008131">
    <property type="entry name" value="Adeno_E3_14_5"/>
</dbReference>
<dbReference type="Pfam" id="PF04834">
    <property type="entry name" value="Adeno_E3_14_5"/>
    <property type="match status" value="1"/>
</dbReference>
<organism>
    <name type="scientific">Human adenovirus B serotype 7</name>
    <name type="common">HAdV-7</name>
    <name type="synonym">Human adenovirus 7</name>
    <dbReference type="NCBI Taxonomy" id="10519"/>
    <lineage>
        <taxon>Viruses</taxon>
        <taxon>Varidnaviria</taxon>
        <taxon>Bamfordvirae</taxon>
        <taxon>Preplasmiviricota</taxon>
        <taxon>Tectiliviricetes</taxon>
        <taxon>Rowavirales</taxon>
        <taxon>Adenoviridae</taxon>
        <taxon>Mastadenovirus</taxon>
        <taxon>Human mastadenovirus B</taxon>
    </lineage>
</organism>
<keyword id="KW-0244">Early protein</keyword>
<keyword id="KW-0325">Glycoprotein</keyword>
<keyword id="KW-1043">Host membrane</keyword>
<keyword id="KW-0472">Membrane</keyword>
<keyword id="KW-0597">Phosphoprotein</keyword>
<keyword id="KW-0732">Signal</keyword>
<keyword id="KW-0812">Transmembrane</keyword>
<keyword id="KW-1133">Transmembrane helix</keyword>
<proteinExistence type="inferred from homology"/>
<comment type="function">
    <text>Down-regulates the EGF receptor and prevents cytolysis by TNF.</text>
</comment>
<comment type="subcellular location">
    <subcellularLocation>
        <location evidence="3">Host membrane</location>
        <topology evidence="3">Single-pass membrane protein</topology>
    </subcellularLocation>
</comment>
<comment type="PTM">
    <text evidence="1">Phosphorylated on serine; O-glycosylated, but not N-glycosylated.</text>
</comment>
<comment type="similarity">
    <text evidence="3">Belongs to the adenoviridae E3_14 family.</text>
</comment>
<protein>
    <recommendedName>
        <fullName>Early E3B 14.9 kDa protein</fullName>
    </recommendedName>
</protein>